<evidence type="ECO:0000255" key="1">
    <source>
        <dbReference type="HAMAP-Rule" id="MF_01021"/>
    </source>
</evidence>
<dbReference type="EC" id="3.5.4.19" evidence="1"/>
<dbReference type="EMBL" id="AM286690">
    <property type="protein sequence ID" value="CAL17582.1"/>
    <property type="molecule type" value="Genomic_DNA"/>
</dbReference>
<dbReference type="RefSeq" id="WP_011589412.1">
    <property type="nucleotide sequence ID" value="NC_008260.1"/>
</dbReference>
<dbReference type="SMR" id="Q0VML6"/>
<dbReference type="STRING" id="393595.ABO_2134"/>
<dbReference type="KEGG" id="abo:ABO_2134"/>
<dbReference type="eggNOG" id="COG0139">
    <property type="taxonomic scope" value="Bacteria"/>
</dbReference>
<dbReference type="HOGENOM" id="CLU_048577_5_0_6"/>
<dbReference type="OrthoDB" id="9795769at2"/>
<dbReference type="UniPathway" id="UPA00031">
    <property type="reaction ID" value="UER00008"/>
</dbReference>
<dbReference type="Proteomes" id="UP000008871">
    <property type="component" value="Chromosome"/>
</dbReference>
<dbReference type="GO" id="GO:0005737">
    <property type="term" value="C:cytoplasm"/>
    <property type="evidence" value="ECO:0007669"/>
    <property type="project" value="UniProtKB-SubCell"/>
</dbReference>
<dbReference type="GO" id="GO:0000287">
    <property type="term" value="F:magnesium ion binding"/>
    <property type="evidence" value="ECO:0007669"/>
    <property type="project" value="UniProtKB-UniRule"/>
</dbReference>
<dbReference type="GO" id="GO:0004635">
    <property type="term" value="F:phosphoribosyl-AMP cyclohydrolase activity"/>
    <property type="evidence" value="ECO:0007669"/>
    <property type="project" value="UniProtKB-UniRule"/>
</dbReference>
<dbReference type="GO" id="GO:0008270">
    <property type="term" value="F:zinc ion binding"/>
    <property type="evidence" value="ECO:0007669"/>
    <property type="project" value="UniProtKB-UniRule"/>
</dbReference>
<dbReference type="GO" id="GO:0000105">
    <property type="term" value="P:L-histidine biosynthetic process"/>
    <property type="evidence" value="ECO:0007669"/>
    <property type="project" value="UniProtKB-UniRule"/>
</dbReference>
<dbReference type="FunFam" id="3.10.20.810:FF:000001">
    <property type="entry name" value="Histidine biosynthesis bifunctional protein HisIE"/>
    <property type="match status" value="1"/>
</dbReference>
<dbReference type="Gene3D" id="3.10.20.810">
    <property type="entry name" value="Phosphoribosyl-AMP cyclohydrolase"/>
    <property type="match status" value="1"/>
</dbReference>
<dbReference type="HAMAP" id="MF_01021">
    <property type="entry name" value="HisI"/>
    <property type="match status" value="1"/>
</dbReference>
<dbReference type="InterPro" id="IPR026660">
    <property type="entry name" value="PRA-CH"/>
</dbReference>
<dbReference type="InterPro" id="IPR002496">
    <property type="entry name" value="PRib_AMP_CycHydrolase_dom"/>
</dbReference>
<dbReference type="InterPro" id="IPR038019">
    <property type="entry name" value="PRib_AMP_CycHydrolase_sf"/>
</dbReference>
<dbReference type="NCBIfam" id="NF000768">
    <property type="entry name" value="PRK00051.1"/>
    <property type="match status" value="1"/>
</dbReference>
<dbReference type="PANTHER" id="PTHR42945">
    <property type="entry name" value="HISTIDINE BIOSYNTHESIS BIFUNCTIONAL PROTEIN"/>
    <property type="match status" value="1"/>
</dbReference>
<dbReference type="PANTHER" id="PTHR42945:SF1">
    <property type="entry name" value="HISTIDINE BIOSYNTHESIS BIFUNCTIONAL PROTEIN HIS7"/>
    <property type="match status" value="1"/>
</dbReference>
<dbReference type="Pfam" id="PF01502">
    <property type="entry name" value="PRA-CH"/>
    <property type="match status" value="1"/>
</dbReference>
<dbReference type="SUPFAM" id="SSF141734">
    <property type="entry name" value="HisI-like"/>
    <property type="match status" value="1"/>
</dbReference>
<organism>
    <name type="scientific">Alcanivorax borkumensis (strain ATCC 700651 / DSM 11573 / NCIMB 13689 / SK2)</name>
    <dbReference type="NCBI Taxonomy" id="393595"/>
    <lineage>
        <taxon>Bacteria</taxon>
        <taxon>Pseudomonadati</taxon>
        <taxon>Pseudomonadota</taxon>
        <taxon>Gammaproteobacteria</taxon>
        <taxon>Oceanospirillales</taxon>
        <taxon>Alcanivoracaceae</taxon>
        <taxon>Alcanivorax</taxon>
    </lineage>
</organism>
<gene>
    <name evidence="1" type="primary">hisI</name>
    <name type="ordered locus">ABO_2134</name>
</gene>
<name>HIS3_ALCBS</name>
<comment type="function">
    <text evidence="1">Catalyzes the hydrolysis of the adenine ring of phosphoribosyl-AMP.</text>
</comment>
<comment type="catalytic activity">
    <reaction evidence="1">
        <text>1-(5-phospho-beta-D-ribosyl)-5'-AMP + H2O = 1-(5-phospho-beta-D-ribosyl)-5-[(5-phospho-beta-D-ribosylamino)methylideneamino]imidazole-4-carboxamide</text>
        <dbReference type="Rhea" id="RHEA:20049"/>
        <dbReference type="ChEBI" id="CHEBI:15377"/>
        <dbReference type="ChEBI" id="CHEBI:58435"/>
        <dbReference type="ChEBI" id="CHEBI:59457"/>
        <dbReference type="EC" id="3.5.4.19"/>
    </reaction>
</comment>
<comment type="cofactor">
    <cofactor evidence="1">
        <name>Mg(2+)</name>
        <dbReference type="ChEBI" id="CHEBI:18420"/>
    </cofactor>
    <text evidence="1">Binds 1 Mg(2+) ion per subunit.</text>
</comment>
<comment type="cofactor">
    <cofactor evidence="1">
        <name>Zn(2+)</name>
        <dbReference type="ChEBI" id="CHEBI:29105"/>
    </cofactor>
    <text evidence="1">Binds 1 zinc ion per subunit.</text>
</comment>
<comment type="pathway">
    <text evidence="1">Amino-acid biosynthesis; L-histidine biosynthesis; L-histidine from 5-phospho-alpha-D-ribose 1-diphosphate: step 3/9.</text>
</comment>
<comment type="subunit">
    <text evidence="1">Homodimer.</text>
</comment>
<comment type="subcellular location">
    <subcellularLocation>
        <location evidence="1">Cytoplasm</location>
    </subcellularLocation>
</comment>
<comment type="similarity">
    <text evidence="1">Belongs to the PRA-CH family.</text>
</comment>
<keyword id="KW-0028">Amino-acid biosynthesis</keyword>
<keyword id="KW-0963">Cytoplasm</keyword>
<keyword id="KW-0368">Histidine biosynthesis</keyword>
<keyword id="KW-0378">Hydrolase</keyword>
<keyword id="KW-0460">Magnesium</keyword>
<keyword id="KW-0479">Metal-binding</keyword>
<keyword id="KW-1185">Reference proteome</keyword>
<keyword id="KW-0862">Zinc</keyword>
<protein>
    <recommendedName>
        <fullName evidence="1">Phosphoribosyl-AMP cyclohydrolase</fullName>
        <shortName evidence="1">PRA-CH</shortName>
        <ecNumber evidence="1">3.5.4.19</ecNumber>
    </recommendedName>
</protein>
<feature type="chain" id="PRO_0000319680" description="Phosphoribosyl-AMP cyclohydrolase">
    <location>
        <begin position="1"/>
        <end position="142"/>
    </location>
</feature>
<feature type="binding site" evidence="1">
    <location>
        <position position="92"/>
    </location>
    <ligand>
        <name>Mg(2+)</name>
        <dbReference type="ChEBI" id="CHEBI:18420"/>
    </ligand>
</feature>
<feature type="binding site" evidence="1">
    <location>
        <position position="93"/>
    </location>
    <ligand>
        <name>Zn(2+)</name>
        <dbReference type="ChEBI" id="CHEBI:29105"/>
        <note>ligand shared between dimeric partners</note>
    </ligand>
</feature>
<feature type="binding site" evidence="1">
    <location>
        <position position="94"/>
    </location>
    <ligand>
        <name>Mg(2+)</name>
        <dbReference type="ChEBI" id="CHEBI:18420"/>
    </ligand>
</feature>
<feature type="binding site" evidence="1">
    <location>
        <position position="96"/>
    </location>
    <ligand>
        <name>Mg(2+)</name>
        <dbReference type="ChEBI" id="CHEBI:18420"/>
    </ligand>
</feature>
<feature type="binding site" evidence="1">
    <location>
        <position position="109"/>
    </location>
    <ligand>
        <name>Zn(2+)</name>
        <dbReference type="ChEBI" id="CHEBI:29105"/>
        <note>ligand shared between dimeric partners</note>
    </ligand>
</feature>
<feature type="binding site" evidence="1">
    <location>
        <position position="116"/>
    </location>
    <ligand>
        <name>Zn(2+)</name>
        <dbReference type="ChEBI" id="CHEBI:29105"/>
        <note>ligand shared between dimeric partners</note>
    </ligand>
</feature>
<reference key="1">
    <citation type="journal article" date="2006" name="Nat. Biotechnol.">
        <title>Genome sequence of the ubiquitous hydrocarbon-degrading marine bacterium Alcanivorax borkumensis.</title>
        <authorList>
            <person name="Schneiker S."/>
            <person name="Martins dos Santos V.A.P."/>
            <person name="Bartels D."/>
            <person name="Bekel T."/>
            <person name="Brecht M."/>
            <person name="Buhrmester J."/>
            <person name="Chernikova T.N."/>
            <person name="Denaro R."/>
            <person name="Ferrer M."/>
            <person name="Gertler C."/>
            <person name="Goesmann A."/>
            <person name="Golyshina O.V."/>
            <person name="Kaminski F."/>
            <person name="Khachane A.N."/>
            <person name="Lang S."/>
            <person name="Linke B."/>
            <person name="McHardy A.C."/>
            <person name="Meyer F."/>
            <person name="Nechitaylo T."/>
            <person name="Puehler A."/>
            <person name="Regenhardt D."/>
            <person name="Rupp O."/>
            <person name="Sabirova J.S."/>
            <person name="Selbitschka W."/>
            <person name="Yakimov M.M."/>
            <person name="Timmis K.N."/>
            <person name="Vorhoelter F.-J."/>
            <person name="Weidner S."/>
            <person name="Kaiser O."/>
            <person name="Golyshin P.N."/>
        </authorList>
    </citation>
    <scope>NUCLEOTIDE SEQUENCE [LARGE SCALE GENOMIC DNA]</scope>
    <source>
        <strain>ATCC 700651 / DSM 11573 / NCIMB 13689 / SK2</strain>
    </source>
</reference>
<proteinExistence type="inferred from homology"/>
<accession>Q0VML6</accession>
<sequence>MFKHNEQQPEGFQISLKEALDNLAFNDAGLVAAIAQQHDSGEVLMMAWMNREAIEETLATGRVCYFSRSRGKLWRKGESSGQVQTLKELRIDCDGDALLVKVDQTGSACHTGRRDCFYWKADANNVTIDKAPIKDPKELYGK</sequence>